<organism>
    <name type="scientific">Acanthamoeba polyphaga mimivirus</name>
    <name type="common">APMV</name>
    <dbReference type="NCBI Taxonomy" id="212035"/>
    <lineage>
        <taxon>Viruses</taxon>
        <taxon>Varidnaviria</taxon>
        <taxon>Bamfordvirae</taxon>
        <taxon>Nucleocytoviricota</taxon>
        <taxon>Megaviricetes</taxon>
        <taxon>Imitervirales</taxon>
        <taxon>Mimiviridae</taxon>
        <taxon>Megamimivirinae</taxon>
        <taxon>Mimivirus</taxon>
        <taxon>Mimivirus bradfordmassiliense</taxon>
    </lineage>
</organism>
<reference key="1">
    <citation type="journal article" date="2004" name="Science">
        <title>The 1.2-megabase genome sequence of Mimivirus.</title>
        <authorList>
            <person name="Raoult D."/>
            <person name="Audic S."/>
            <person name="Robert C."/>
            <person name="Abergel C."/>
            <person name="Renesto P."/>
            <person name="Ogata H."/>
            <person name="La Scola B."/>
            <person name="Susan M."/>
            <person name="Claverie J.-M."/>
        </authorList>
    </citation>
    <scope>NUCLEOTIDE SEQUENCE [LARGE SCALE GENOMIC DNA]</scope>
    <source>
        <strain>Rowbotham-Bradford</strain>
    </source>
</reference>
<gene>
    <name type="primary">TK</name>
    <name type="ordered locus">MIMI_L258</name>
</gene>
<feature type="chain" id="PRO_0000174928" description="Thymidine kinase">
    <location>
        <begin position="1"/>
        <end position="225"/>
    </location>
</feature>
<feature type="region of interest" description="Disordered" evidence="3">
    <location>
        <begin position="197"/>
        <end position="225"/>
    </location>
</feature>
<feature type="compositionally biased region" description="Polar residues" evidence="3">
    <location>
        <begin position="197"/>
        <end position="207"/>
    </location>
</feature>
<feature type="compositionally biased region" description="Basic and acidic residues" evidence="3">
    <location>
        <begin position="208"/>
        <end position="225"/>
    </location>
</feature>
<feature type="active site" description="Proton acceptor" evidence="2">
    <location>
        <position position="92"/>
    </location>
</feature>
<feature type="binding site" evidence="1">
    <location>
        <begin position="8"/>
        <end position="15"/>
    </location>
    <ligand>
        <name>ATP</name>
        <dbReference type="ChEBI" id="CHEBI:30616"/>
    </ligand>
</feature>
<feature type="binding site" evidence="1">
    <location>
        <position position="122"/>
    </location>
    <ligand>
        <name>substrate</name>
    </ligand>
</feature>
<feature type="binding site" evidence="1">
    <location>
        <position position="147"/>
    </location>
    <ligand>
        <name>Zn(2+)</name>
        <dbReference type="ChEBI" id="CHEBI:29105"/>
    </ligand>
</feature>
<feature type="binding site" evidence="1">
    <location>
        <position position="150"/>
    </location>
    <ligand>
        <name>Zn(2+)</name>
        <dbReference type="ChEBI" id="CHEBI:29105"/>
    </ligand>
</feature>
<feature type="binding site" evidence="1">
    <location>
        <begin position="167"/>
        <end position="171"/>
    </location>
    <ligand>
        <name>substrate</name>
    </ligand>
</feature>
<feature type="binding site" evidence="1">
    <location>
        <position position="180"/>
    </location>
    <ligand>
        <name>Zn(2+)</name>
        <dbReference type="ChEBI" id="CHEBI:29105"/>
    </ligand>
</feature>
<feature type="binding site" evidence="1">
    <location>
        <position position="183"/>
    </location>
    <ligand>
        <name>Zn(2+)</name>
        <dbReference type="ChEBI" id="CHEBI:29105"/>
    </ligand>
</feature>
<evidence type="ECO:0000250" key="1"/>
<evidence type="ECO:0000255" key="2"/>
<evidence type="ECO:0000256" key="3">
    <source>
        <dbReference type="SAM" id="MobiDB-lite"/>
    </source>
</evidence>
<evidence type="ECO:0000305" key="4"/>
<name>KITH_MIMIV</name>
<comment type="catalytic activity">
    <reaction>
        <text>thymidine + ATP = dTMP + ADP + H(+)</text>
        <dbReference type="Rhea" id="RHEA:19129"/>
        <dbReference type="ChEBI" id="CHEBI:15378"/>
        <dbReference type="ChEBI" id="CHEBI:17748"/>
        <dbReference type="ChEBI" id="CHEBI:30616"/>
        <dbReference type="ChEBI" id="CHEBI:63528"/>
        <dbReference type="ChEBI" id="CHEBI:456216"/>
        <dbReference type="EC" id="2.7.1.21"/>
    </reaction>
</comment>
<comment type="similarity">
    <text evidence="4">Belongs to the thymidine kinase family.</text>
</comment>
<accession>Q5UP25</accession>
<dbReference type="EC" id="2.7.1.21"/>
<dbReference type="EMBL" id="AY653733">
    <property type="protein sequence ID" value="AAV50530.1"/>
    <property type="molecule type" value="Genomic_DNA"/>
</dbReference>
<dbReference type="SMR" id="Q5UP25"/>
<dbReference type="KEGG" id="vg:9924867"/>
<dbReference type="OrthoDB" id="9611at10239"/>
<dbReference type="Proteomes" id="UP000001134">
    <property type="component" value="Genome"/>
</dbReference>
<dbReference type="GO" id="GO:0005524">
    <property type="term" value="F:ATP binding"/>
    <property type="evidence" value="ECO:0007669"/>
    <property type="project" value="UniProtKB-KW"/>
</dbReference>
<dbReference type="GO" id="GO:0046872">
    <property type="term" value="F:metal ion binding"/>
    <property type="evidence" value="ECO:0007669"/>
    <property type="project" value="UniProtKB-KW"/>
</dbReference>
<dbReference type="GO" id="GO:0004797">
    <property type="term" value="F:thymidine kinase activity"/>
    <property type="evidence" value="ECO:0007669"/>
    <property type="project" value="UniProtKB-EC"/>
</dbReference>
<dbReference type="GO" id="GO:0071897">
    <property type="term" value="P:DNA biosynthetic process"/>
    <property type="evidence" value="ECO:0007669"/>
    <property type="project" value="UniProtKB-KW"/>
</dbReference>
<dbReference type="GO" id="GO:0046104">
    <property type="term" value="P:thymidine metabolic process"/>
    <property type="evidence" value="ECO:0007669"/>
    <property type="project" value="TreeGrafter"/>
</dbReference>
<dbReference type="Gene3D" id="3.30.60.20">
    <property type="match status" value="1"/>
</dbReference>
<dbReference type="Gene3D" id="3.40.50.300">
    <property type="entry name" value="P-loop containing nucleotide triphosphate hydrolases"/>
    <property type="match status" value="1"/>
</dbReference>
<dbReference type="InterPro" id="IPR027417">
    <property type="entry name" value="P-loop_NTPase"/>
</dbReference>
<dbReference type="InterPro" id="IPR001267">
    <property type="entry name" value="Thymidine_kinase"/>
</dbReference>
<dbReference type="InterPro" id="IPR020633">
    <property type="entry name" value="Thymidine_kinase_CS"/>
</dbReference>
<dbReference type="PANTHER" id="PTHR11441">
    <property type="entry name" value="THYMIDINE KINASE"/>
    <property type="match status" value="1"/>
</dbReference>
<dbReference type="PANTHER" id="PTHR11441:SF0">
    <property type="entry name" value="THYMIDINE KINASE, CYTOSOLIC"/>
    <property type="match status" value="1"/>
</dbReference>
<dbReference type="Pfam" id="PF00265">
    <property type="entry name" value="TK"/>
    <property type="match status" value="1"/>
</dbReference>
<dbReference type="PIRSF" id="PIRSF035805">
    <property type="entry name" value="TK_cell"/>
    <property type="match status" value="1"/>
</dbReference>
<dbReference type="SUPFAM" id="SSF57716">
    <property type="entry name" value="Glucocorticoid receptor-like (DNA-binding domain)"/>
    <property type="match status" value="1"/>
</dbReference>
<dbReference type="SUPFAM" id="SSF52540">
    <property type="entry name" value="P-loop containing nucleoside triphosphate hydrolases"/>
    <property type="match status" value="1"/>
</dbReference>
<dbReference type="PROSITE" id="PS00603">
    <property type="entry name" value="TK_CELLULAR_TYPE"/>
    <property type="match status" value="1"/>
</dbReference>
<proteinExistence type="inferred from homology"/>
<organismHost>
    <name type="scientific">Acanthamoeba polyphaga</name>
    <name type="common">Amoeba</name>
    <dbReference type="NCBI Taxonomy" id="5757"/>
</organismHost>
<protein>
    <recommendedName>
        <fullName>Thymidine kinase</fullName>
        <ecNumber>2.7.1.21</ecNumber>
    </recommendedName>
</protein>
<keyword id="KW-0067">ATP-binding</keyword>
<keyword id="KW-0237">DNA synthesis</keyword>
<keyword id="KW-0418">Kinase</keyword>
<keyword id="KW-0479">Metal-binding</keyword>
<keyword id="KW-0547">Nucleotide-binding</keyword>
<keyword id="KW-1185">Reference proteome</keyword>
<keyword id="KW-0808">Transferase</keyword>
<keyword id="KW-0862">Zinc</keyword>
<sequence>MSITTIIGPMFSGKTTEFIRLIERKKIAGKKCLIIKNYRDIRYDSDDNDKYHVTTHNNIIYRNCDIMFTDNLNKTSLIDTFQEKYDVIGIEEGFFFEGVTDFSNELANRGMEVIISTLESSYKQEIFSEIGKLIAISEDVIKLKAICMGCKISDASFTIRTIESDEKILVGGIDKYQSVCRKCLNLHKRKNTLSTESEQINNQTELSEPTRQKESLKIKKRRIDS</sequence>